<name>HSLV_CAUSK</name>
<evidence type="ECO:0000255" key="1">
    <source>
        <dbReference type="HAMAP-Rule" id="MF_00248"/>
    </source>
</evidence>
<feature type="chain" id="PRO_0000336767" description="ATP-dependent protease subunit HslV">
    <location>
        <begin position="1"/>
        <end position="187"/>
    </location>
</feature>
<feature type="active site" evidence="1">
    <location>
        <position position="13"/>
    </location>
</feature>
<feature type="binding site" evidence="1">
    <location>
        <position position="172"/>
    </location>
    <ligand>
        <name>Na(+)</name>
        <dbReference type="ChEBI" id="CHEBI:29101"/>
    </ligand>
</feature>
<feature type="binding site" evidence="1">
    <location>
        <position position="175"/>
    </location>
    <ligand>
        <name>Na(+)</name>
        <dbReference type="ChEBI" id="CHEBI:29101"/>
    </ligand>
</feature>
<feature type="binding site" evidence="1">
    <location>
        <position position="178"/>
    </location>
    <ligand>
        <name>Na(+)</name>
        <dbReference type="ChEBI" id="CHEBI:29101"/>
    </ligand>
</feature>
<sequence length="187" mass="19558">MQNSNSFPDWHGTTILAVRKNGSTVIAGDGQVSMGPTVVKGNARKVRRLAGGKVVAGFAGATADAFTLIERLEAKLEQYPDQLARACVDLAKDWRTDRYLRRLEAMLLVADADSIFTVTGVGDVLEPGESTGGGSVAAIGSGGNYALAAAKALIDQDLTAEEIARKAMGIAAEICVYTNGNLTVESL</sequence>
<accession>B0T7B0</accession>
<organism>
    <name type="scientific">Caulobacter sp. (strain K31)</name>
    <dbReference type="NCBI Taxonomy" id="366602"/>
    <lineage>
        <taxon>Bacteria</taxon>
        <taxon>Pseudomonadati</taxon>
        <taxon>Pseudomonadota</taxon>
        <taxon>Alphaproteobacteria</taxon>
        <taxon>Caulobacterales</taxon>
        <taxon>Caulobacteraceae</taxon>
        <taxon>Caulobacter</taxon>
    </lineage>
</organism>
<reference key="1">
    <citation type="submission" date="2008-01" db="EMBL/GenBank/DDBJ databases">
        <title>Complete sequence of chromosome of Caulobacter sp. K31.</title>
        <authorList>
            <consortium name="US DOE Joint Genome Institute"/>
            <person name="Copeland A."/>
            <person name="Lucas S."/>
            <person name="Lapidus A."/>
            <person name="Barry K."/>
            <person name="Glavina del Rio T."/>
            <person name="Dalin E."/>
            <person name="Tice H."/>
            <person name="Pitluck S."/>
            <person name="Bruce D."/>
            <person name="Goodwin L."/>
            <person name="Thompson L.S."/>
            <person name="Brettin T."/>
            <person name="Detter J.C."/>
            <person name="Han C."/>
            <person name="Schmutz J."/>
            <person name="Larimer F."/>
            <person name="Land M."/>
            <person name="Hauser L."/>
            <person name="Kyrpides N."/>
            <person name="Kim E."/>
            <person name="Stephens C."/>
            <person name="Richardson P."/>
        </authorList>
    </citation>
    <scope>NUCLEOTIDE SEQUENCE [LARGE SCALE GENOMIC DNA]</scope>
    <source>
        <strain>K31</strain>
    </source>
</reference>
<dbReference type="EC" id="3.4.25.2" evidence="1"/>
<dbReference type="EMBL" id="CP000927">
    <property type="protein sequence ID" value="ABZ74174.1"/>
    <property type="molecule type" value="Genomic_DNA"/>
</dbReference>
<dbReference type="SMR" id="B0T7B0"/>
<dbReference type="STRING" id="366602.Caul_5054"/>
<dbReference type="MEROPS" id="T01.006"/>
<dbReference type="KEGG" id="cak:Caul_5054"/>
<dbReference type="eggNOG" id="COG5405">
    <property type="taxonomic scope" value="Bacteria"/>
</dbReference>
<dbReference type="HOGENOM" id="CLU_093872_1_0_5"/>
<dbReference type="OrthoDB" id="9804884at2"/>
<dbReference type="GO" id="GO:0009376">
    <property type="term" value="C:HslUV protease complex"/>
    <property type="evidence" value="ECO:0007669"/>
    <property type="project" value="UniProtKB-UniRule"/>
</dbReference>
<dbReference type="GO" id="GO:0005839">
    <property type="term" value="C:proteasome core complex"/>
    <property type="evidence" value="ECO:0007669"/>
    <property type="project" value="InterPro"/>
</dbReference>
<dbReference type="GO" id="GO:0046872">
    <property type="term" value="F:metal ion binding"/>
    <property type="evidence" value="ECO:0007669"/>
    <property type="project" value="UniProtKB-KW"/>
</dbReference>
<dbReference type="GO" id="GO:0004298">
    <property type="term" value="F:threonine-type endopeptidase activity"/>
    <property type="evidence" value="ECO:0007669"/>
    <property type="project" value="UniProtKB-KW"/>
</dbReference>
<dbReference type="GO" id="GO:0051603">
    <property type="term" value="P:proteolysis involved in protein catabolic process"/>
    <property type="evidence" value="ECO:0007669"/>
    <property type="project" value="InterPro"/>
</dbReference>
<dbReference type="CDD" id="cd01913">
    <property type="entry name" value="protease_HslV"/>
    <property type="match status" value="1"/>
</dbReference>
<dbReference type="Gene3D" id="3.60.20.10">
    <property type="entry name" value="Glutamine Phosphoribosylpyrophosphate, subunit 1, domain 1"/>
    <property type="match status" value="1"/>
</dbReference>
<dbReference type="HAMAP" id="MF_00248">
    <property type="entry name" value="HslV"/>
    <property type="match status" value="1"/>
</dbReference>
<dbReference type="InterPro" id="IPR022281">
    <property type="entry name" value="ATP-dep_Prtase_HsIV_su"/>
</dbReference>
<dbReference type="InterPro" id="IPR029055">
    <property type="entry name" value="Ntn_hydrolases_N"/>
</dbReference>
<dbReference type="InterPro" id="IPR001353">
    <property type="entry name" value="Proteasome_sua/b"/>
</dbReference>
<dbReference type="InterPro" id="IPR023333">
    <property type="entry name" value="Proteasome_suB-type"/>
</dbReference>
<dbReference type="NCBIfam" id="TIGR03692">
    <property type="entry name" value="ATP_dep_HslV"/>
    <property type="match status" value="1"/>
</dbReference>
<dbReference type="NCBIfam" id="NF003964">
    <property type="entry name" value="PRK05456.1"/>
    <property type="match status" value="1"/>
</dbReference>
<dbReference type="PANTHER" id="PTHR32194:SF7">
    <property type="entry name" value="ATP-DEPENDENT PROTEASE SUBUNIT HSLV"/>
    <property type="match status" value="1"/>
</dbReference>
<dbReference type="PANTHER" id="PTHR32194">
    <property type="entry name" value="METALLOPROTEASE TLDD"/>
    <property type="match status" value="1"/>
</dbReference>
<dbReference type="Pfam" id="PF00227">
    <property type="entry name" value="Proteasome"/>
    <property type="match status" value="1"/>
</dbReference>
<dbReference type="PIRSF" id="PIRSF039093">
    <property type="entry name" value="HslV"/>
    <property type="match status" value="1"/>
</dbReference>
<dbReference type="SUPFAM" id="SSF56235">
    <property type="entry name" value="N-terminal nucleophile aminohydrolases (Ntn hydrolases)"/>
    <property type="match status" value="1"/>
</dbReference>
<dbReference type="PROSITE" id="PS51476">
    <property type="entry name" value="PROTEASOME_BETA_2"/>
    <property type="match status" value="1"/>
</dbReference>
<gene>
    <name evidence="1" type="primary">hslV</name>
    <name type="ordered locus">Caul_5054</name>
</gene>
<proteinExistence type="inferred from homology"/>
<keyword id="KW-0021">Allosteric enzyme</keyword>
<keyword id="KW-0963">Cytoplasm</keyword>
<keyword id="KW-0378">Hydrolase</keyword>
<keyword id="KW-0479">Metal-binding</keyword>
<keyword id="KW-0645">Protease</keyword>
<keyword id="KW-0915">Sodium</keyword>
<keyword id="KW-0888">Threonine protease</keyword>
<comment type="function">
    <text evidence="1">Protease subunit of a proteasome-like degradation complex believed to be a general protein degrading machinery.</text>
</comment>
<comment type="catalytic activity">
    <reaction evidence="1">
        <text>ATP-dependent cleavage of peptide bonds with broad specificity.</text>
        <dbReference type="EC" id="3.4.25.2"/>
    </reaction>
</comment>
<comment type="activity regulation">
    <text evidence="1">Allosterically activated by HslU binding.</text>
</comment>
<comment type="subunit">
    <text evidence="1">A double ring-shaped homohexamer of HslV is capped on each side by a ring-shaped HslU homohexamer. The assembly of the HslU/HslV complex is dependent on binding of ATP.</text>
</comment>
<comment type="subcellular location">
    <subcellularLocation>
        <location evidence="1">Cytoplasm</location>
    </subcellularLocation>
</comment>
<comment type="similarity">
    <text evidence="1">Belongs to the peptidase T1B family. HslV subfamily.</text>
</comment>
<protein>
    <recommendedName>
        <fullName evidence="1">ATP-dependent protease subunit HslV</fullName>
        <ecNumber evidence="1">3.4.25.2</ecNumber>
    </recommendedName>
</protein>